<proteinExistence type="inferred from homology"/>
<accession>Q12T28</accession>
<organism>
    <name type="scientific">Shewanella denitrificans (strain OS217 / ATCC BAA-1090 / DSM 15013)</name>
    <dbReference type="NCBI Taxonomy" id="318161"/>
    <lineage>
        <taxon>Bacteria</taxon>
        <taxon>Pseudomonadati</taxon>
        <taxon>Pseudomonadota</taxon>
        <taxon>Gammaproteobacteria</taxon>
        <taxon>Alteromonadales</taxon>
        <taxon>Shewanellaceae</taxon>
        <taxon>Shewanella</taxon>
    </lineage>
</organism>
<protein>
    <recommendedName>
        <fullName evidence="1">GTP 3',8-cyclase</fullName>
        <ecNumber evidence="1">4.1.99.22</ecNumber>
    </recommendedName>
    <alternativeName>
        <fullName evidence="1">Molybdenum cofactor biosynthesis protein A</fullName>
    </alternativeName>
</protein>
<evidence type="ECO:0000255" key="1">
    <source>
        <dbReference type="HAMAP-Rule" id="MF_01225"/>
    </source>
</evidence>
<evidence type="ECO:0000255" key="2">
    <source>
        <dbReference type="PROSITE-ProRule" id="PRU01266"/>
    </source>
</evidence>
<feature type="chain" id="PRO_1000085708" description="GTP 3',8-cyclase">
    <location>
        <begin position="1"/>
        <end position="337"/>
    </location>
</feature>
<feature type="domain" description="Radical SAM core" evidence="2">
    <location>
        <begin position="18"/>
        <end position="242"/>
    </location>
</feature>
<feature type="binding site" evidence="1">
    <location>
        <position position="27"/>
    </location>
    <ligand>
        <name>GTP</name>
        <dbReference type="ChEBI" id="CHEBI:37565"/>
    </ligand>
</feature>
<feature type="binding site" evidence="1">
    <location>
        <position position="34"/>
    </location>
    <ligand>
        <name>[4Fe-4S] cluster</name>
        <dbReference type="ChEBI" id="CHEBI:49883"/>
        <label>1</label>
        <note>4Fe-4S-S-AdoMet</note>
    </ligand>
</feature>
<feature type="binding site" evidence="1">
    <location>
        <position position="38"/>
    </location>
    <ligand>
        <name>[4Fe-4S] cluster</name>
        <dbReference type="ChEBI" id="CHEBI:49883"/>
        <label>1</label>
        <note>4Fe-4S-S-AdoMet</note>
    </ligand>
</feature>
<feature type="binding site" evidence="1">
    <location>
        <position position="40"/>
    </location>
    <ligand>
        <name>S-adenosyl-L-methionine</name>
        <dbReference type="ChEBI" id="CHEBI:59789"/>
    </ligand>
</feature>
<feature type="binding site" evidence="1">
    <location>
        <position position="41"/>
    </location>
    <ligand>
        <name>[4Fe-4S] cluster</name>
        <dbReference type="ChEBI" id="CHEBI:49883"/>
        <label>1</label>
        <note>4Fe-4S-S-AdoMet</note>
    </ligand>
</feature>
<feature type="binding site" evidence="1">
    <location>
        <position position="76"/>
    </location>
    <ligand>
        <name>GTP</name>
        <dbReference type="ChEBI" id="CHEBI:37565"/>
    </ligand>
</feature>
<feature type="binding site" evidence="1">
    <location>
        <position position="80"/>
    </location>
    <ligand>
        <name>S-adenosyl-L-methionine</name>
        <dbReference type="ChEBI" id="CHEBI:59789"/>
    </ligand>
</feature>
<feature type="binding site" evidence="1">
    <location>
        <position position="107"/>
    </location>
    <ligand>
        <name>GTP</name>
        <dbReference type="ChEBI" id="CHEBI:37565"/>
    </ligand>
</feature>
<feature type="binding site" evidence="1">
    <location>
        <position position="131"/>
    </location>
    <ligand>
        <name>S-adenosyl-L-methionine</name>
        <dbReference type="ChEBI" id="CHEBI:59789"/>
    </ligand>
</feature>
<feature type="binding site" evidence="1">
    <location>
        <position position="168"/>
    </location>
    <ligand>
        <name>GTP</name>
        <dbReference type="ChEBI" id="CHEBI:37565"/>
    </ligand>
</feature>
<feature type="binding site" evidence="1">
    <location>
        <position position="202"/>
    </location>
    <ligand>
        <name>S-adenosyl-L-methionine</name>
        <dbReference type="ChEBI" id="CHEBI:59789"/>
    </ligand>
</feature>
<feature type="binding site" evidence="1">
    <location>
        <position position="265"/>
    </location>
    <ligand>
        <name>[4Fe-4S] cluster</name>
        <dbReference type="ChEBI" id="CHEBI:49883"/>
        <label>2</label>
        <note>4Fe-4S-substrate</note>
    </ligand>
</feature>
<feature type="binding site" evidence="1">
    <location>
        <position position="268"/>
    </location>
    <ligand>
        <name>[4Fe-4S] cluster</name>
        <dbReference type="ChEBI" id="CHEBI:49883"/>
        <label>2</label>
        <note>4Fe-4S-substrate</note>
    </ligand>
</feature>
<feature type="binding site" evidence="1">
    <location>
        <begin position="270"/>
        <end position="272"/>
    </location>
    <ligand>
        <name>GTP</name>
        <dbReference type="ChEBI" id="CHEBI:37565"/>
    </ligand>
</feature>
<feature type="binding site" evidence="1">
    <location>
        <position position="282"/>
    </location>
    <ligand>
        <name>[4Fe-4S] cluster</name>
        <dbReference type="ChEBI" id="CHEBI:49883"/>
        <label>2</label>
        <note>4Fe-4S-substrate</note>
    </ligand>
</feature>
<name>MOAA_SHEDO</name>
<gene>
    <name evidence="1" type="primary">moaA</name>
    <name type="ordered locus">Sden_0101</name>
</gene>
<keyword id="KW-0004">4Fe-4S</keyword>
<keyword id="KW-0342">GTP-binding</keyword>
<keyword id="KW-0408">Iron</keyword>
<keyword id="KW-0411">Iron-sulfur</keyword>
<keyword id="KW-0456">Lyase</keyword>
<keyword id="KW-0479">Metal-binding</keyword>
<keyword id="KW-0501">Molybdenum cofactor biosynthesis</keyword>
<keyword id="KW-0547">Nucleotide-binding</keyword>
<keyword id="KW-1185">Reference proteome</keyword>
<keyword id="KW-0949">S-adenosyl-L-methionine</keyword>
<sequence>MHSPPALGKVNMSQLQDNFGRRFHYLRLSITDACNFKCTYCLPDGYQSQGNSPFLSLSEIELLLGAFSQMGTQKVRITGGEPSLRKDFIDIIGLAANTPNIKTVATTTNGYRLAKNAQAWYDAGLRRINVSIDSLDPKMFYQITGENRFDQVMRGVDAALESGFERVKINAVLLKGLNSQDLPRFLHWIKHMPVDLRFIELMETGLGREYFKAHHLAGTQVKQQLIRDGWQLDKADILDGPAQNFSHSDYQGRIGLIMPYEKNFCVSCNRLRVSAKGQLHLCLFTENGVNLKDLLQDKSQTPELMARLQQQLGFKTAAHSLHQGITGVTTHLASIGG</sequence>
<dbReference type="EC" id="4.1.99.22" evidence="1"/>
<dbReference type="EMBL" id="CP000302">
    <property type="protein sequence ID" value="ABE53398.1"/>
    <property type="molecule type" value="Genomic_DNA"/>
</dbReference>
<dbReference type="SMR" id="Q12T28"/>
<dbReference type="STRING" id="318161.Sden_0101"/>
<dbReference type="KEGG" id="sdn:Sden_0101"/>
<dbReference type="eggNOG" id="COG2896">
    <property type="taxonomic scope" value="Bacteria"/>
</dbReference>
<dbReference type="HOGENOM" id="CLU_009273_0_1_6"/>
<dbReference type="UniPathway" id="UPA00344"/>
<dbReference type="Proteomes" id="UP000001982">
    <property type="component" value="Chromosome"/>
</dbReference>
<dbReference type="GO" id="GO:0051539">
    <property type="term" value="F:4 iron, 4 sulfur cluster binding"/>
    <property type="evidence" value="ECO:0007669"/>
    <property type="project" value="UniProtKB-UniRule"/>
</dbReference>
<dbReference type="GO" id="GO:0061799">
    <property type="term" value="F:cyclic pyranopterin monophosphate synthase activity"/>
    <property type="evidence" value="ECO:0007669"/>
    <property type="project" value="TreeGrafter"/>
</dbReference>
<dbReference type="GO" id="GO:0061798">
    <property type="term" value="F:GTP 3',8'-cyclase activity"/>
    <property type="evidence" value="ECO:0007669"/>
    <property type="project" value="UniProtKB-UniRule"/>
</dbReference>
<dbReference type="GO" id="GO:0005525">
    <property type="term" value="F:GTP binding"/>
    <property type="evidence" value="ECO:0007669"/>
    <property type="project" value="UniProtKB-UniRule"/>
</dbReference>
<dbReference type="GO" id="GO:0046872">
    <property type="term" value="F:metal ion binding"/>
    <property type="evidence" value="ECO:0007669"/>
    <property type="project" value="UniProtKB-KW"/>
</dbReference>
<dbReference type="GO" id="GO:1904047">
    <property type="term" value="F:S-adenosyl-L-methionine binding"/>
    <property type="evidence" value="ECO:0007669"/>
    <property type="project" value="UniProtKB-UniRule"/>
</dbReference>
<dbReference type="GO" id="GO:0006777">
    <property type="term" value="P:Mo-molybdopterin cofactor biosynthetic process"/>
    <property type="evidence" value="ECO:0007669"/>
    <property type="project" value="UniProtKB-UniRule"/>
</dbReference>
<dbReference type="CDD" id="cd01335">
    <property type="entry name" value="Radical_SAM"/>
    <property type="match status" value="1"/>
</dbReference>
<dbReference type="CDD" id="cd21117">
    <property type="entry name" value="Twitch_MoaA"/>
    <property type="match status" value="1"/>
</dbReference>
<dbReference type="FunFam" id="3.20.20.70:FF:000057">
    <property type="entry name" value="GTP 3',8-cyclase"/>
    <property type="match status" value="1"/>
</dbReference>
<dbReference type="Gene3D" id="3.20.20.70">
    <property type="entry name" value="Aldolase class I"/>
    <property type="match status" value="1"/>
</dbReference>
<dbReference type="HAMAP" id="MF_01225_B">
    <property type="entry name" value="MoaA_B"/>
    <property type="match status" value="1"/>
</dbReference>
<dbReference type="InterPro" id="IPR013785">
    <property type="entry name" value="Aldolase_TIM"/>
</dbReference>
<dbReference type="InterPro" id="IPR006638">
    <property type="entry name" value="Elp3/MiaA/NifB-like_rSAM"/>
</dbReference>
<dbReference type="InterPro" id="IPR013483">
    <property type="entry name" value="MoaA"/>
</dbReference>
<dbReference type="InterPro" id="IPR010505">
    <property type="entry name" value="MoaA_twitch"/>
</dbReference>
<dbReference type="InterPro" id="IPR050105">
    <property type="entry name" value="MoCo_biosynth_MoaA/MoaC"/>
</dbReference>
<dbReference type="InterPro" id="IPR007197">
    <property type="entry name" value="rSAM"/>
</dbReference>
<dbReference type="NCBIfam" id="TIGR02666">
    <property type="entry name" value="moaA"/>
    <property type="match status" value="1"/>
</dbReference>
<dbReference type="PANTHER" id="PTHR22960:SF28">
    <property type="entry name" value="GTP 3',8-CYCLASE"/>
    <property type="match status" value="1"/>
</dbReference>
<dbReference type="PANTHER" id="PTHR22960">
    <property type="entry name" value="MOLYBDOPTERIN COFACTOR SYNTHESIS PROTEIN A"/>
    <property type="match status" value="1"/>
</dbReference>
<dbReference type="Pfam" id="PF13353">
    <property type="entry name" value="Fer4_12"/>
    <property type="match status" value="1"/>
</dbReference>
<dbReference type="Pfam" id="PF06463">
    <property type="entry name" value="Mob_synth_C"/>
    <property type="match status" value="1"/>
</dbReference>
<dbReference type="Pfam" id="PF04055">
    <property type="entry name" value="Radical_SAM"/>
    <property type="match status" value="1"/>
</dbReference>
<dbReference type="SFLD" id="SFLDG01383">
    <property type="entry name" value="cyclic_pyranopterin_phosphate"/>
    <property type="match status" value="1"/>
</dbReference>
<dbReference type="SFLD" id="SFLDG01072">
    <property type="entry name" value="dehydrogenase_like"/>
    <property type="match status" value="1"/>
</dbReference>
<dbReference type="SMART" id="SM00729">
    <property type="entry name" value="Elp3"/>
    <property type="match status" value="1"/>
</dbReference>
<dbReference type="SUPFAM" id="SSF102114">
    <property type="entry name" value="Radical SAM enzymes"/>
    <property type="match status" value="1"/>
</dbReference>
<dbReference type="PROSITE" id="PS51918">
    <property type="entry name" value="RADICAL_SAM"/>
    <property type="match status" value="1"/>
</dbReference>
<reference key="1">
    <citation type="submission" date="2006-03" db="EMBL/GenBank/DDBJ databases">
        <title>Complete sequence of Shewanella denitrificans OS217.</title>
        <authorList>
            <consortium name="US DOE Joint Genome Institute"/>
            <person name="Copeland A."/>
            <person name="Lucas S."/>
            <person name="Lapidus A."/>
            <person name="Barry K."/>
            <person name="Detter J.C."/>
            <person name="Glavina del Rio T."/>
            <person name="Hammon N."/>
            <person name="Israni S."/>
            <person name="Dalin E."/>
            <person name="Tice H."/>
            <person name="Pitluck S."/>
            <person name="Brettin T."/>
            <person name="Bruce D."/>
            <person name="Han C."/>
            <person name="Tapia R."/>
            <person name="Gilna P."/>
            <person name="Kiss H."/>
            <person name="Schmutz J."/>
            <person name="Larimer F."/>
            <person name="Land M."/>
            <person name="Hauser L."/>
            <person name="Kyrpides N."/>
            <person name="Lykidis A."/>
            <person name="Richardson P."/>
        </authorList>
    </citation>
    <scope>NUCLEOTIDE SEQUENCE [LARGE SCALE GENOMIC DNA]</scope>
    <source>
        <strain>OS217 / ATCC BAA-1090 / DSM 15013</strain>
    </source>
</reference>
<comment type="function">
    <text evidence="1">Catalyzes the cyclization of GTP to (8S)-3',8-cyclo-7,8-dihydroguanosine 5'-triphosphate.</text>
</comment>
<comment type="catalytic activity">
    <reaction evidence="1">
        <text>GTP + AH2 + S-adenosyl-L-methionine = (8S)-3',8-cyclo-7,8-dihydroguanosine 5'-triphosphate + 5'-deoxyadenosine + L-methionine + A + H(+)</text>
        <dbReference type="Rhea" id="RHEA:49576"/>
        <dbReference type="ChEBI" id="CHEBI:13193"/>
        <dbReference type="ChEBI" id="CHEBI:15378"/>
        <dbReference type="ChEBI" id="CHEBI:17319"/>
        <dbReference type="ChEBI" id="CHEBI:17499"/>
        <dbReference type="ChEBI" id="CHEBI:37565"/>
        <dbReference type="ChEBI" id="CHEBI:57844"/>
        <dbReference type="ChEBI" id="CHEBI:59789"/>
        <dbReference type="ChEBI" id="CHEBI:131766"/>
        <dbReference type="EC" id="4.1.99.22"/>
    </reaction>
</comment>
<comment type="cofactor">
    <cofactor evidence="1">
        <name>[4Fe-4S] cluster</name>
        <dbReference type="ChEBI" id="CHEBI:49883"/>
    </cofactor>
    <text evidence="1">Binds 2 [4Fe-4S] clusters. Binds 1 [4Fe-4S] cluster coordinated with 3 cysteines and an exchangeable S-adenosyl-L-methionine and 1 [4Fe-4S] cluster coordinated with 3 cysteines and the GTP-derived substrate.</text>
</comment>
<comment type="pathway">
    <text evidence="1">Cofactor biosynthesis; molybdopterin biosynthesis.</text>
</comment>
<comment type="subunit">
    <text evidence="1">Monomer and homodimer.</text>
</comment>
<comment type="similarity">
    <text evidence="1">Belongs to the radical SAM superfamily. MoaA family.</text>
</comment>